<evidence type="ECO:0000255" key="1">
    <source>
        <dbReference type="HAMAP-Rule" id="MF_00671"/>
    </source>
</evidence>
<evidence type="ECO:0000256" key="2">
    <source>
        <dbReference type="SAM" id="MobiDB-lite"/>
    </source>
</evidence>
<proteinExistence type="inferred from homology"/>
<reference key="1">
    <citation type="submission" date="2008-02" db="EMBL/GenBank/DDBJ databases">
        <title>Complete sequence of chromosome 1 of Burkholderia cenocepacia MC0-3.</title>
        <authorList>
            <person name="Copeland A."/>
            <person name="Lucas S."/>
            <person name="Lapidus A."/>
            <person name="Barry K."/>
            <person name="Bruce D."/>
            <person name="Goodwin L."/>
            <person name="Glavina del Rio T."/>
            <person name="Dalin E."/>
            <person name="Tice H."/>
            <person name="Pitluck S."/>
            <person name="Chain P."/>
            <person name="Malfatti S."/>
            <person name="Shin M."/>
            <person name="Vergez L."/>
            <person name="Schmutz J."/>
            <person name="Larimer F."/>
            <person name="Land M."/>
            <person name="Hauser L."/>
            <person name="Kyrpides N."/>
            <person name="Mikhailova N."/>
            <person name="Tiedje J."/>
            <person name="Richardson P."/>
        </authorList>
    </citation>
    <scope>NUCLEOTIDE SEQUENCE [LARGE SCALE GENOMIC DNA]</scope>
    <source>
        <strain>MC0-3</strain>
    </source>
</reference>
<sequence length="431" mass="45783">MSLMTKLGFRALVASCLITAGSAANAQVNVLITGVGSTQFPIATANFTNEANLPQQITSIVRADLARSGKFTNIDAGSTPVPETASVDLGAWKAKGANAFVAGSVNRDANGQYKVNFILYDTVKQQSLGGLSLTATDTTLRTAGHKIADYIYQKLLGVRGVFATRLSYVIKTGNRYQLQISDSDGQNARIALSSTEPIISPAWSPSGTKVAYVSFERKKPIVYIHDLPTGRRYMVSDQKGNNSAPAWSPDSNTLAVALSLTGNTQIYTVNANGGGLRRLTQSSSIDTEPFYSPDGRWIYFTSDRGGAPQIYRMPAQGESAGAAQRVTFTGSYNTSPRVSPDGKLLAYISRTGGGFKLYVQDLQTGAANAITNTNRDESPSFAANGQYLLYATQSGGRNVLAAVPSDGSAPPQILSVQGGSVREPSWGPFMQ</sequence>
<dbReference type="EMBL" id="CP000958">
    <property type="protein sequence ID" value="ACA89947.1"/>
    <property type="molecule type" value="Genomic_DNA"/>
</dbReference>
<dbReference type="RefSeq" id="WP_012327978.1">
    <property type="nucleotide sequence ID" value="NC_010508.1"/>
</dbReference>
<dbReference type="SMR" id="B1JWH3"/>
<dbReference type="GeneID" id="83047562"/>
<dbReference type="KEGG" id="bcm:Bcenmc03_0769"/>
<dbReference type="HOGENOM" id="CLU_047123_0_0_4"/>
<dbReference type="Proteomes" id="UP000002169">
    <property type="component" value="Chromosome 1"/>
</dbReference>
<dbReference type="GO" id="GO:0042597">
    <property type="term" value="C:periplasmic space"/>
    <property type="evidence" value="ECO:0007669"/>
    <property type="project" value="UniProtKB-SubCell"/>
</dbReference>
<dbReference type="GO" id="GO:0051301">
    <property type="term" value="P:cell division"/>
    <property type="evidence" value="ECO:0007669"/>
    <property type="project" value="UniProtKB-UniRule"/>
</dbReference>
<dbReference type="GO" id="GO:0017038">
    <property type="term" value="P:protein import"/>
    <property type="evidence" value="ECO:0007669"/>
    <property type="project" value="InterPro"/>
</dbReference>
<dbReference type="Gene3D" id="2.120.10.30">
    <property type="entry name" value="TolB, C-terminal domain"/>
    <property type="match status" value="1"/>
</dbReference>
<dbReference type="Gene3D" id="3.40.50.10070">
    <property type="entry name" value="TolB, N-terminal domain"/>
    <property type="match status" value="1"/>
</dbReference>
<dbReference type="HAMAP" id="MF_00671">
    <property type="entry name" value="TolB"/>
    <property type="match status" value="1"/>
</dbReference>
<dbReference type="InterPro" id="IPR011042">
    <property type="entry name" value="6-blade_b-propeller_TolB-like"/>
</dbReference>
<dbReference type="InterPro" id="IPR011659">
    <property type="entry name" value="PD40"/>
</dbReference>
<dbReference type="InterPro" id="IPR014167">
    <property type="entry name" value="Tol-Pal_TolB"/>
</dbReference>
<dbReference type="InterPro" id="IPR007195">
    <property type="entry name" value="TolB_N"/>
</dbReference>
<dbReference type="NCBIfam" id="TIGR02800">
    <property type="entry name" value="propeller_TolB"/>
    <property type="match status" value="1"/>
</dbReference>
<dbReference type="PANTHER" id="PTHR36842:SF1">
    <property type="entry name" value="PROTEIN TOLB"/>
    <property type="match status" value="1"/>
</dbReference>
<dbReference type="PANTHER" id="PTHR36842">
    <property type="entry name" value="PROTEIN TOLB HOMOLOG"/>
    <property type="match status" value="1"/>
</dbReference>
<dbReference type="Pfam" id="PF07676">
    <property type="entry name" value="PD40"/>
    <property type="match status" value="5"/>
</dbReference>
<dbReference type="Pfam" id="PF04052">
    <property type="entry name" value="TolB_N"/>
    <property type="match status" value="1"/>
</dbReference>
<dbReference type="SUPFAM" id="SSF52964">
    <property type="entry name" value="TolB, N-terminal domain"/>
    <property type="match status" value="1"/>
</dbReference>
<dbReference type="SUPFAM" id="SSF69304">
    <property type="entry name" value="Tricorn protease N-terminal domain"/>
    <property type="match status" value="1"/>
</dbReference>
<keyword id="KW-0131">Cell cycle</keyword>
<keyword id="KW-0132">Cell division</keyword>
<keyword id="KW-0574">Periplasm</keyword>
<keyword id="KW-0732">Signal</keyword>
<comment type="function">
    <text evidence="1">Part of the Tol-Pal system, which plays a role in outer membrane invagination during cell division and is important for maintaining outer membrane integrity.</text>
</comment>
<comment type="subunit">
    <text evidence="1">The Tol-Pal system is composed of five core proteins: the inner membrane proteins TolA, TolQ and TolR, the periplasmic protein TolB and the outer membrane protein Pal. They form a network linking the inner and outer membranes and the peptidoglycan layer.</text>
</comment>
<comment type="subcellular location">
    <subcellularLocation>
        <location evidence="1">Periplasm</location>
    </subcellularLocation>
</comment>
<comment type="similarity">
    <text evidence="1">Belongs to the TolB family.</text>
</comment>
<gene>
    <name evidence="1" type="primary">tolB</name>
    <name type="ordered locus">Bcenmc03_0769</name>
</gene>
<name>TOLB_BURO0</name>
<accession>B1JWH3</accession>
<feature type="signal peptide" evidence="1">
    <location>
        <begin position="1"/>
        <end position="26"/>
    </location>
</feature>
<feature type="chain" id="PRO_1000131518" description="Tol-Pal system protein TolB" evidence="1">
    <location>
        <begin position="27"/>
        <end position="431"/>
    </location>
</feature>
<feature type="region of interest" description="Disordered" evidence="2">
    <location>
        <begin position="406"/>
        <end position="431"/>
    </location>
</feature>
<organism>
    <name type="scientific">Burkholderia orbicola (strain MC0-3)</name>
    <dbReference type="NCBI Taxonomy" id="406425"/>
    <lineage>
        <taxon>Bacteria</taxon>
        <taxon>Pseudomonadati</taxon>
        <taxon>Pseudomonadota</taxon>
        <taxon>Betaproteobacteria</taxon>
        <taxon>Burkholderiales</taxon>
        <taxon>Burkholderiaceae</taxon>
        <taxon>Burkholderia</taxon>
        <taxon>Burkholderia cepacia complex</taxon>
        <taxon>Burkholderia orbicola</taxon>
    </lineage>
</organism>
<protein>
    <recommendedName>
        <fullName evidence="1">Tol-Pal system protein TolB</fullName>
    </recommendedName>
</protein>